<name>RPOY_STRPB</name>
<organism>
    <name type="scientific">Streptococcus pyogenes serotype M12 (strain MGAS2096)</name>
    <dbReference type="NCBI Taxonomy" id="370553"/>
    <lineage>
        <taxon>Bacteria</taxon>
        <taxon>Bacillati</taxon>
        <taxon>Bacillota</taxon>
        <taxon>Bacilli</taxon>
        <taxon>Lactobacillales</taxon>
        <taxon>Streptococcaceae</taxon>
        <taxon>Streptococcus</taxon>
    </lineage>
</organism>
<accession>Q1J9Y9</accession>
<protein>
    <recommendedName>
        <fullName evidence="1">DNA-directed RNA polymerase subunit epsilon</fullName>
        <shortName evidence="1">RNAP epsilon subunit</shortName>
        <ecNumber evidence="1">2.7.7.6</ecNumber>
    </recommendedName>
    <alternativeName>
        <fullName evidence="1">RNA polymerase epsilon subunit</fullName>
    </alternativeName>
    <alternativeName>
        <fullName evidence="1">Transcriptase subunit epsilon</fullName>
    </alternativeName>
</protein>
<sequence>MIYKVFYQETKDQSPRRESTKALYLNIDATDELDGRIKARRLVEDNTYYNVEFIELLSDKHLDYEKETGVFELTEF</sequence>
<feature type="chain" id="PRO_1000068880" description="DNA-directed RNA polymerase subunit epsilon">
    <location>
        <begin position="1"/>
        <end position="76"/>
    </location>
</feature>
<comment type="function">
    <text evidence="1">A non-essential component of RNA polymerase (RNAP).</text>
</comment>
<comment type="catalytic activity">
    <reaction evidence="1">
        <text>RNA(n) + a ribonucleoside 5'-triphosphate = RNA(n+1) + diphosphate</text>
        <dbReference type="Rhea" id="RHEA:21248"/>
        <dbReference type="Rhea" id="RHEA-COMP:14527"/>
        <dbReference type="Rhea" id="RHEA-COMP:17342"/>
        <dbReference type="ChEBI" id="CHEBI:33019"/>
        <dbReference type="ChEBI" id="CHEBI:61557"/>
        <dbReference type="ChEBI" id="CHEBI:140395"/>
        <dbReference type="EC" id="2.7.7.6"/>
    </reaction>
</comment>
<comment type="subunit">
    <text evidence="1">RNAP is composed of a core of 2 alpha, a beta and a beta' subunit. The core is associated with a delta subunit, and at least one of epsilon or omega. When a sigma factor is associated with the core the holoenzyme is formed, which can initiate transcription.</text>
</comment>
<comment type="similarity">
    <text evidence="1">Belongs to the RNA polymerase subunit epsilon family.</text>
</comment>
<evidence type="ECO:0000255" key="1">
    <source>
        <dbReference type="HAMAP-Rule" id="MF_01553"/>
    </source>
</evidence>
<dbReference type="EC" id="2.7.7.6" evidence="1"/>
<dbReference type="EMBL" id="CP000261">
    <property type="protein sequence ID" value="ABF36672.1"/>
    <property type="molecule type" value="Genomic_DNA"/>
</dbReference>
<dbReference type="SMR" id="Q1J9Y9"/>
<dbReference type="KEGG" id="spj:MGAS2096_Spy1620"/>
<dbReference type="HOGENOM" id="CLU_187518_0_0_9"/>
<dbReference type="GO" id="GO:0000428">
    <property type="term" value="C:DNA-directed RNA polymerase complex"/>
    <property type="evidence" value="ECO:0007669"/>
    <property type="project" value="UniProtKB-KW"/>
</dbReference>
<dbReference type="GO" id="GO:0003677">
    <property type="term" value="F:DNA binding"/>
    <property type="evidence" value="ECO:0007669"/>
    <property type="project" value="UniProtKB-UniRule"/>
</dbReference>
<dbReference type="GO" id="GO:0003899">
    <property type="term" value="F:DNA-directed RNA polymerase activity"/>
    <property type="evidence" value="ECO:0007669"/>
    <property type="project" value="UniProtKB-UniRule"/>
</dbReference>
<dbReference type="GO" id="GO:0006351">
    <property type="term" value="P:DNA-templated transcription"/>
    <property type="evidence" value="ECO:0007669"/>
    <property type="project" value="UniProtKB-UniRule"/>
</dbReference>
<dbReference type="Gene3D" id="3.10.20.730">
    <property type="entry name" value="RNAP, epsilon subunit-like"/>
    <property type="match status" value="1"/>
</dbReference>
<dbReference type="HAMAP" id="MF_01553">
    <property type="entry name" value="RNApol_bact_RpoY"/>
    <property type="match status" value="1"/>
</dbReference>
<dbReference type="InterPro" id="IPR009907">
    <property type="entry name" value="RpoY"/>
</dbReference>
<dbReference type="NCBIfam" id="NF010188">
    <property type="entry name" value="PRK13667.1"/>
    <property type="match status" value="1"/>
</dbReference>
<dbReference type="Pfam" id="PF07288">
    <property type="entry name" value="RpoY"/>
    <property type="match status" value="1"/>
</dbReference>
<reference key="1">
    <citation type="journal article" date="2006" name="Proc. Natl. Acad. Sci. U.S.A.">
        <title>Molecular genetic anatomy of inter- and intraserotype variation in the human bacterial pathogen group A Streptococcus.</title>
        <authorList>
            <person name="Beres S.B."/>
            <person name="Richter E.W."/>
            <person name="Nagiec M.J."/>
            <person name="Sumby P."/>
            <person name="Porcella S.F."/>
            <person name="DeLeo F.R."/>
            <person name="Musser J.M."/>
        </authorList>
    </citation>
    <scope>NUCLEOTIDE SEQUENCE [LARGE SCALE GENOMIC DNA]</scope>
    <source>
        <strain>MGAS2096</strain>
    </source>
</reference>
<keyword id="KW-0240">DNA-directed RNA polymerase</keyword>
<keyword id="KW-0548">Nucleotidyltransferase</keyword>
<keyword id="KW-0804">Transcription</keyword>
<keyword id="KW-0808">Transferase</keyword>
<gene>
    <name evidence="1" type="primary">rpoY</name>
    <name type="ordered locus">MGAS2096_Spy1620</name>
</gene>
<proteinExistence type="inferred from homology"/>